<evidence type="ECO:0000255" key="1">
    <source>
        <dbReference type="HAMAP-Rule" id="MF_01631"/>
    </source>
</evidence>
<comment type="function">
    <text evidence="1">Catalyzes the last two sequential reactions in the de novo biosynthetic pathway for UDP-N-acetylglucosamine (UDP-GlcNAc). The C-terminal domain catalyzes the transfer of acetyl group from acetyl coenzyme A to glucosamine-1-phosphate (GlcN-1-P) to produce N-acetylglucosamine-1-phosphate (GlcNAc-1-P), which is converted into UDP-GlcNAc by the transfer of uridine 5-monophosphate (from uridine 5-triphosphate), a reaction catalyzed by the N-terminal domain.</text>
</comment>
<comment type="catalytic activity">
    <reaction evidence="1">
        <text>alpha-D-glucosamine 1-phosphate + acetyl-CoA = N-acetyl-alpha-D-glucosamine 1-phosphate + CoA + H(+)</text>
        <dbReference type="Rhea" id="RHEA:13725"/>
        <dbReference type="ChEBI" id="CHEBI:15378"/>
        <dbReference type="ChEBI" id="CHEBI:57287"/>
        <dbReference type="ChEBI" id="CHEBI:57288"/>
        <dbReference type="ChEBI" id="CHEBI:57776"/>
        <dbReference type="ChEBI" id="CHEBI:58516"/>
        <dbReference type="EC" id="2.3.1.157"/>
    </reaction>
</comment>
<comment type="catalytic activity">
    <reaction evidence="1">
        <text>N-acetyl-alpha-D-glucosamine 1-phosphate + UTP + H(+) = UDP-N-acetyl-alpha-D-glucosamine + diphosphate</text>
        <dbReference type="Rhea" id="RHEA:13509"/>
        <dbReference type="ChEBI" id="CHEBI:15378"/>
        <dbReference type="ChEBI" id="CHEBI:33019"/>
        <dbReference type="ChEBI" id="CHEBI:46398"/>
        <dbReference type="ChEBI" id="CHEBI:57705"/>
        <dbReference type="ChEBI" id="CHEBI:57776"/>
        <dbReference type="EC" id="2.7.7.23"/>
    </reaction>
</comment>
<comment type="cofactor">
    <cofactor evidence="1">
        <name>Mg(2+)</name>
        <dbReference type="ChEBI" id="CHEBI:18420"/>
    </cofactor>
    <text evidence="1">Binds 1 Mg(2+) ion per subunit.</text>
</comment>
<comment type="pathway">
    <text evidence="1">Nucleotide-sugar biosynthesis; UDP-N-acetyl-alpha-D-glucosamine biosynthesis; N-acetyl-alpha-D-glucosamine 1-phosphate from alpha-D-glucosamine 6-phosphate (route II): step 2/2.</text>
</comment>
<comment type="pathway">
    <text evidence="1">Nucleotide-sugar biosynthesis; UDP-N-acetyl-alpha-D-glucosamine biosynthesis; UDP-N-acetyl-alpha-D-glucosamine from N-acetyl-alpha-D-glucosamine 1-phosphate: step 1/1.</text>
</comment>
<comment type="pathway">
    <text evidence="1">Bacterial outer membrane biogenesis; LPS lipid A biosynthesis.</text>
</comment>
<comment type="subunit">
    <text evidence="1">Homotrimer.</text>
</comment>
<comment type="subcellular location">
    <subcellularLocation>
        <location evidence="1">Cytoplasm</location>
    </subcellularLocation>
</comment>
<comment type="similarity">
    <text evidence="1">In the N-terminal section; belongs to the N-acetylglucosamine-1-phosphate uridyltransferase family.</text>
</comment>
<comment type="similarity">
    <text evidence="1">In the C-terminal section; belongs to the transferase hexapeptide repeat family.</text>
</comment>
<feature type="chain" id="PRO_1000069733" description="Bifunctional protein GlmU">
    <location>
        <begin position="1"/>
        <end position="455"/>
    </location>
</feature>
<feature type="region of interest" description="Pyrophosphorylase" evidence="1">
    <location>
        <begin position="1"/>
        <end position="230"/>
    </location>
</feature>
<feature type="region of interest" description="Linker" evidence="1">
    <location>
        <begin position="231"/>
        <end position="251"/>
    </location>
</feature>
<feature type="region of interest" description="N-acetyltransferase" evidence="1">
    <location>
        <begin position="252"/>
        <end position="455"/>
    </location>
</feature>
<feature type="active site" description="Proton acceptor" evidence="1">
    <location>
        <position position="363"/>
    </location>
</feature>
<feature type="binding site" evidence="1">
    <location>
        <begin position="9"/>
        <end position="12"/>
    </location>
    <ligand>
        <name>UDP-N-acetyl-alpha-D-glucosamine</name>
        <dbReference type="ChEBI" id="CHEBI:57705"/>
    </ligand>
</feature>
<feature type="binding site" evidence="1">
    <location>
        <position position="23"/>
    </location>
    <ligand>
        <name>UDP-N-acetyl-alpha-D-glucosamine</name>
        <dbReference type="ChEBI" id="CHEBI:57705"/>
    </ligand>
</feature>
<feature type="binding site" evidence="1">
    <location>
        <position position="73"/>
    </location>
    <ligand>
        <name>UDP-N-acetyl-alpha-D-glucosamine</name>
        <dbReference type="ChEBI" id="CHEBI:57705"/>
    </ligand>
</feature>
<feature type="binding site" evidence="1">
    <location>
        <begin position="78"/>
        <end position="79"/>
    </location>
    <ligand>
        <name>UDP-N-acetyl-alpha-D-glucosamine</name>
        <dbReference type="ChEBI" id="CHEBI:57705"/>
    </ligand>
</feature>
<feature type="binding site" evidence="1">
    <location>
        <begin position="101"/>
        <end position="103"/>
    </location>
    <ligand>
        <name>UDP-N-acetyl-alpha-D-glucosamine</name>
        <dbReference type="ChEBI" id="CHEBI:57705"/>
    </ligand>
</feature>
<feature type="binding site" evidence="1">
    <location>
        <position position="103"/>
    </location>
    <ligand>
        <name>Mg(2+)</name>
        <dbReference type="ChEBI" id="CHEBI:18420"/>
    </ligand>
</feature>
<feature type="binding site" evidence="1">
    <location>
        <position position="140"/>
    </location>
    <ligand>
        <name>UDP-N-acetyl-alpha-D-glucosamine</name>
        <dbReference type="ChEBI" id="CHEBI:57705"/>
    </ligand>
</feature>
<feature type="binding site" evidence="1">
    <location>
        <position position="155"/>
    </location>
    <ligand>
        <name>UDP-N-acetyl-alpha-D-glucosamine</name>
        <dbReference type="ChEBI" id="CHEBI:57705"/>
    </ligand>
</feature>
<feature type="binding site" evidence="1">
    <location>
        <position position="170"/>
    </location>
    <ligand>
        <name>UDP-N-acetyl-alpha-D-glucosamine</name>
        <dbReference type="ChEBI" id="CHEBI:57705"/>
    </ligand>
</feature>
<feature type="binding site" evidence="1">
    <location>
        <position position="228"/>
    </location>
    <ligand>
        <name>Mg(2+)</name>
        <dbReference type="ChEBI" id="CHEBI:18420"/>
    </ligand>
</feature>
<feature type="binding site" evidence="1">
    <location>
        <position position="228"/>
    </location>
    <ligand>
        <name>UDP-N-acetyl-alpha-D-glucosamine</name>
        <dbReference type="ChEBI" id="CHEBI:57705"/>
    </ligand>
</feature>
<feature type="binding site" evidence="1">
    <location>
        <position position="333"/>
    </location>
    <ligand>
        <name>UDP-N-acetyl-alpha-D-glucosamine</name>
        <dbReference type="ChEBI" id="CHEBI:57705"/>
    </ligand>
</feature>
<feature type="binding site" evidence="1">
    <location>
        <position position="351"/>
    </location>
    <ligand>
        <name>UDP-N-acetyl-alpha-D-glucosamine</name>
        <dbReference type="ChEBI" id="CHEBI:57705"/>
    </ligand>
</feature>
<feature type="binding site" evidence="1">
    <location>
        <position position="366"/>
    </location>
    <ligand>
        <name>UDP-N-acetyl-alpha-D-glucosamine</name>
        <dbReference type="ChEBI" id="CHEBI:57705"/>
    </ligand>
</feature>
<feature type="binding site" evidence="1">
    <location>
        <position position="377"/>
    </location>
    <ligand>
        <name>UDP-N-acetyl-alpha-D-glucosamine</name>
        <dbReference type="ChEBI" id="CHEBI:57705"/>
    </ligand>
</feature>
<feature type="binding site" evidence="1">
    <location>
        <begin position="386"/>
        <end position="387"/>
    </location>
    <ligand>
        <name>acetyl-CoA</name>
        <dbReference type="ChEBI" id="CHEBI:57288"/>
    </ligand>
</feature>
<feature type="binding site" evidence="1">
    <location>
        <position position="405"/>
    </location>
    <ligand>
        <name>acetyl-CoA</name>
        <dbReference type="ChEBI" id="CHEBI:57288"/>
    </ligand>
</feature>
<feature type="binding site" evidence="1">
    <location>
        <position position="423"/>
    </location>
    <ligand>
        <name>acetyl-CoA</name>
        <dbReference type="ChEBI" id="CHEBI:57288"/>
    </ligand>
</feature>
<feature type="binding site" evidence="1">
    <location>
        <position position="440"/>
    </location>
    <ligand>
        <name>acetyl-CoA</name>
        <dbReference type="ChEBI" id="CHEBI:57288"/>
    </ligand>
</feature>
<accession>A5VI16</accession>
<dbReference type="EC" id="2.7.7.23" evidence="1"/>
<dbReference type="EC" id="2.3.1.157" evidence="1"/>
<dbReference type="EMBL" id="CP000705">
    <property type="protein sequence ID" value="ABQ82490.1"/>
    <property type="molecule type" value="Genomic_DNA"/>
</dbReference>
<dbReference type="RefSeq" id="WP_003667195.1">
    <property type="nucleotide sequence ID" value="NC_009513.1"/>
</dbReference>
<dbReference type="SMR" id="A5VI16"/>
<dbReference type="STRING" id="557436.Lreu_0220"/>
<dbReference type="GeneID" id="77190426"/>
<dbReference type="KEGG" id="lre:Lreu_0220"/>
<dbReference type="PATRIC" id="fig|557436.17.peg.1561"/>
<dbReference type="eggNOG" id="COG1207">
    <property type="taxonomic scope" value="Bacteria"/>
</dbReference>
<dbReference type="HOGENOM" id="CLU_029499_15_2_9"/>
<dbReference type="UniPathway" id="UPA00113">
    <property type="reaction ID" value="UER00532"/>
</dbReference>
<dbReference type="UniPathway" id="UPA00113">
    <property type="reaction ID" value="UER00533"/>
</dbReference>
<dbReference type="UniPathway" id="UPA00973"/>
<dbReference type="Proteomes" id="UP000001991">
    <property type="component" value="Chromosome"/>
</dbReference>
<dbReference type="GO" id="GO:0005737">
    <property type="term" value="C:cytoplasm"/>
    <property type="evidence" value="ECO:0007669"/>
    <property type="project" value="UniProtKB-SubCell"/>
</dbReference>
<dbReference type="GO" id="GO:0016020">
    <property type="term" value="C:membrane"/>
    <property type="evidence" value="ECO:0007669"/>
    <property type="project" value="GOC"/>
</dbReference>
<dbReference type="GO" id="GO:0019134">
    <property type="term" value="F:glucosamine-1-phosphate N-acetyltransferase activity"/>
    <property type="evidence" value="ECO:0007669"/>
    <property type="project" value="UniProtKB-UniRule"/>
</dbReference>
<dbReference type="GO" id="GO:0000287">
    <property type="term" value="F:magnesium ion binding"/>
    <property type="evidence" value="ECO:0007669"/>
    <property type="project" value="UniProtKB-UniRule"/>
</dbReference>
<dbReference type="GO" id="GO:0003977">
    <property type="term" value="F:UDP-N-acetylglucosamine diphosphorylase activity"/>
    <property type="evidence" value="ECO:0007669"/>
    <property type="project" value="UniProtKB-UniRule"/>
</dbReference>
<dbReference type="GO" id="GO:0000902">
    <property type="term" value="P:cell morphogenesis"/>
    <property type="evidence" value="ECO:0007669"/>
    <property type="project" value="UniProtKB-UniRule"/>
</dbReference>
<dbReference type="GO" id="GO:0071555">
    <property type="term" value="P:cell wall organization"/>
    <property type="evidence" value="ECO:0007669"/>
    <property type="project" value="UniProtKB-KW"/>
</dbReference>
<dbReference type="GO" id="GO:0009245">
    <property type="term" value="P:lipid A biosynthetic process"/>
    <property type="evidence" value="ECO:0007669"/>
    <property type="project" value="UniProtKB-UniRule"/>
</dbReference>
<dbReference type="GO" id="GO:0009252">
    <property type="term" value="P:peptidoglycan biosynthetic process"/>
    <property type="evidence" value="ECO:0007669"/>
    <property type="project" value="UniProtKB-UniRule"/>
</dbReference>
<dbReference type="GO" id="GO:0008360">
    <property type="term" value="P:regulation of cell shape"/>
    <property type="evidence" value="ECO:0007669"/>
    <property type="project" value="UniProtKB-KW"/>
</dbReference>
<dbReference type="GO" id="GO:0006048">
    <property type="term" value="P:UDP-N-acetylglucosamine biosynthetic process"/>
    <property type="evidence" value="ECO:0007669"/>
    <property type="project" value="UniProtKB-UniPathway"/>
</dbReference>
<dbReference type="CDD" id="cd02540">
    <property type="entry name" value="GT2_GlmU_N_bac"/>
    <property type="match status" value="1"/>
</dbReference>
<dbReference type="CDD" id="cd03353">
    <property type="entry name" value="LbH_GlmU_C"/>
    <property type="match status" value="1"/>
</dbReference>
<dbReference type="Gene3D" id="2.160.10.10">
    <property type="entry name" value="Hexapeptide repeat proteins"/>
    <property type="match status" value="1"/>
</dbReference>
<dbReference type="Gene3D" id="3.90.550.10">
    <property type="entry name" value="Spore Coat Polysaccharide Biosynthesis Protein SpsA, Chain A"/>
    <property type="match status" value="1"/>
</dbReference>
<dbReference type="HAMAP" id="MF_01631">
    <property type="entry name" value="GlmU"/>
    <property type="match status" value="1"/>
</dbReference>
<dbReference type="InterPro" id="IPR005882">
    <property type="entry name" value="Bifunctional_GlmU"/>
</dbReference>
<dbReference type="InterPro" id="IPR050065">
    <property type="entry name" value="GlmU-like"/>
</dbReference>
<dbReference type="InterPro" id="IPR038009">
    <property type="entry name" value="GlmU_C_LbH"/>
</dbReference>
<dbReference type="InterPro" id="IPR001451">
    <property type="entry name" value="Hexapep"/>
</dbReference>
<dbReference type="InterPro" id="IPR005835">
    <property type="entry name" value="NTP_transferase_dom"/>
</dbReference>
<dbReference type="InterPro" id="IPR029044">
    <property type="entry name" value="Nucleotide-diphossugar_trans"/>
</dbReference>
<dbReference type="InterPro" id="IPR011004">
    <property type="entry name" value="Trimer_LpxA-like_sf"/>
</dbReference>
<dbReference type="NCBIfam" id="TIGR01173">
    <property type="entry name" value="glmU"/>
    <property type="match status" value="1"/>
</dbReference>
<dbReference type="NCBIfam" id="NF010934">
    <property type="entry name" value="PRK14354.1"/>
    <property type="match status" value="1"/>
</dbReference>
<dbReference type="PANTHER" id="PTHR43584:SF3">
    <property type="entry name" value="BIFUNCTIONAL PROTEIN GLMU"/>
    <property type="match status" value="1"/>
</dbReference>
<dbReference type="PANTHER" id="PTHR43584">
    <property type="entry name" value="NUCLEOTIDYL TRANSFERASE"/>
    <property type="match status" value="1"/>
</dbReference>
<dbReference type="Pfam" id="PF00132">
    <property type="entry name" value="Hexapep"/>
    <property type="match status" value="2"/>
</dbReference>
<dbReference type="Pfam" id="PF00483">
    <property type="entry name" value="NTP_transferase"/>
    <property type="match status" value="1"/>
</dbReference>
<dbReference type="SUPFAM" id="SSF53448">
    <property type="entry name" value="Nucleotide-diphospho-sugar transferases"/>
    <property type="match status" value="1"/>
</dbReference>
<dbReference type="SUPFAM" id="SSF51161">
    <property type="entry name" value="Trimeric LpxA-like enzymes"/>
    <property type="match status" value="1"/>
</dbReference>
<protein>
    <recommendedName>
        <fullName evidence="1">Bifunctional protein GlmU</fullName>
    </recommendedName>
    <domain>
        <recommendedName>
            <fullName evidence="1">UDP-N-acetylglucosamine pyrophosphorylase</fullName>
            <ecNumber evidence="1">2.7.7.23</ecNumber>
        </recommendedName>
        <alternativeName>
            <fullName evidence="1">N-acetylglucosamine-1-phosphate uridyltransferase</fullName>
        </alternativeName>
    </domain>
    <domain>
        <recommendedName>
            <fullName evidence="1">Glucosamine-1-phosphate N-acetyltransferase</fullName>
            <ecNumber evidence="1">2.3.1.157</ecNumber>
        </recommendedName>
    </domain>
</protein>
<sequence>MTKRNAIILAAGKGTRMRSKLYKVLHQVCGKTMVEHVLTQLEKAKIDNIITIVGFGAETVEQQLGHRTKYALQEQQLGTGHAVMQTKDLLANEDGETIIVSGDTPLFTAETFEKLFEYHEQRHAAATILTSIAPDPTGYGRIVRNDVGIVERIVEQKDATVQEQAIKEINTGVYCFDNKKLFAALSKITNDNAQGEYYLTDVIGILKQENEIVTAYKMDNFDESMGVNDRVALARANKVMRNRINTHWMREGVSMIDPETTYIDADVKIGRDTVIEGGVVIKGHTEIGNDCYIGAGSRITDSKIHDGVKIISSTLQEAEMHNGSDIGPNSHLRPEAEIGENVHIGNFCEVKKAYIGEGTKVGHLTYIGNATLGKDINVGCGVVFVNYDGTNKHHTNVGDHAFIGSNSNLVAPVNIAKDSFVAAGSTITDSTEQYDMAIARARQVNKENYAKKLPW</sequence>
<proteinExistence type="inferred from homology"/>
<reference key="1">
    <citation type="journal article" date="2011" name="PLoS Genet.">
        <title>The evolution of host specialization in the vertebrate gut symbiont Lactobacillus reuteri.</title>
        <authorList>
            <person name="Frese S.A."/>
            <person name="Benson A.K."/>
            <person name="Tannock G.W."/>
            <person name="Loach D.M."/>
            <person name="Kim J."/>
            <person name="Zhang M."/>
            <person name="Oh P.L."/>
            <person name="Heng N.C."/>
            <person name="Patil P.B."/>
            <person name="Juge N."/>
            <person name="Mackenzie D.A."/>
            <person name="Pearson B.M."/>
            <person name="Lapidus A."/>
            <person name="Dalin E."/>
            <person name="Tice H."/>
            <person name="Goltsman E."/>
            <person name="Land M."/>
            <person name="Hauser L."/>
            <person name="Ivanova N."/>
            <person name="Kyrpides N.C."/>
            <person name="Walter J."/>
        </authorList>
    </citation>
    <scope>NUCLEOTIDE SEQUENCE [LARGE SCALE GENOMIC DNA]</scope>
    <source>
        <strain>DSM 20016</strain>
    </source>
</reference>
<gene>
    <name evidence="1" type="primary">glmU</name>
    <name type="ordered locus">Lreu_0220</name>
</gene>
<name>GLMU_LIMRD</name>
<organism>
    <name type="scientific">Limosilactobacillus reuteri (strain DSM 20016)</name>
    <name type="common">Lactobacillus reuteri</name>
    <dbReference type="NCBI Taxonomy" id="557436"/>
    <lineage>
        <taxon>Bacteria</taxon>
        <taxon>Bacillati</taxon>
        <taxon>Bacillota</taxon>
        <taxon>Bacilli</taxon>
        <taxon>Lactobacillales</taxon>
        <taxon>Lactobacillaceae</taxon>
        <taxon>Limosilactobacillus</taxon>
    </lineage>
</organism>
<keyword id="KW-0012">Acyltransferase</keyword>
<keyword id="KW-0133">Cell shape</keyword>
<keyword id="KW-0961">Cell wall biogenesis/degradation</keyword>
<keyword id="KW-0963">Cytoplasm</keyword>
<keyword id="KW-0460">Magnesium</keyword>
<keyword id="KW-0479">Metal-binding</keyword>
<keyword id="KW-0511">Multifunctional enzyme</keyword>
<keyword id="KW-0548">Nucleotidyltransferase</keyword>
<keyword id="KW-0573">Peptidoglycan synthesis</keyword>
<keyword id="KW-1185">Reference proteome</keyword>
<keyword id="KW-0677">Repeat</keyword>
<keyword id="KW-0808">Transferase</keyword>